<protein>
    <recommendedName>
        <fullName evidence="1">tRNA U34 carboxymethyltransferase</fullName>
        <ecNumber evidence="1">2.5.1.-</ecNumber>
    </recommendedName>
</protein>
<dbReference type="EC" id="2.5.1.-" evidence="1"/>
<dbReference type="EMBL" id="CP000606">
    <property type="protein sequence ID" value="ABO23948.1"/>
    <property type="molecule type" value="Genomic_DNA"/>
</dbReference>
<dbReference type="RefSeq" id="WP_011865880.1">
    <property type="nucleotide sequence ID" value="NC_009092.1"/>
</dbReference>
<dbReference type="SMR" id="A3QEQ0"/>
<dbReference type="STRING" id="323850.Shew_2082"/>
<dbReference type="KEGG" id="slo:Shew_2082"/>
<dbReference type="eggNOG" id="COG0500">
    <property type="taxonomic scope" value="Bacteria"/>
</dbReference>
<dbReference type="HOGENOM" id="CLU_052665_0_0_6"/>
<dbReference type="OrthoDB" id="9773188at2"/>
<dbReference type="Proteomes" id="UP000001558">
    <property type="component" value="Chromosome"/>
</dbReference>
<dbReference type="GO" id="GO:0008168">
    <property type="term" value="F:methyltransferase activity"/>
    <property type="evidence" value="ECO:0007669"/>
    <property type="project" value="TreeGrafter"/>
</dbReference>
<dbReference type="GO" id="GO:0016765">
    <property type="term" value="F:transferase activity, transferring alkyl or aryl (other than methyl) groups"/>
    <property type="evidence" value="ECO:0007669"/>
    <property type="project" value="UniProtKB-UniRule"/>
</dbReference>
<dbReference type="GO" id="GO:0002098">
    <property type="term" value="P:tRNA wobble uridine modification"/>
    <property type="evidence" value="ECO:0007669"/>
    <property type="project" value="InterPro"/>
</dbReference>
<dbReference type="CDD" id="cd02440">
    <property type="entry name" value="AdoMet_MTases"/>
    <property type="match status" value="1"/>
</dbReference>
<dbReference type="Gene3D" id="3.40.50.150">
    <property type="entry name" value="Vaccinia Virus protein VP39"/>
    <property type="match status" value="1"/>
</dbReference>
<dbReference type="HAMAP" id="MF_01590">
    <property type="entry name" value="tRNA_carboxymethyltr_CmoB"/>
    <property type="match status" value="1"/>
</dbReference>
<dbReference type="InterPro" id="IPR010017">
    <property type="entry name" value="CmoB"/>
</dbReference>
<dbReference type="InterPro" id="IPR027555">
    <property type="entry name" value="Mo5U34_MeTrfas-like"/>
</dbReference>
<dbReference type="InterPro" id="IPR029063">
    <property type="entry name" value="SAM-dependent_MTases_sf"/>
</dbReference>
<dbReference type="NCBIfam" id="NF011650">
    <property type="entry name" value="PRK15068.1"/>
    <property type="match status" value="1"/>
</dbReference>
<dbReference type="NCBIfam" id="TIGR00452">
    <property type="entry name" value="tRNA 5-methoxyuridine(34)/uridine 5-oxyacetic acid(34) synthase CmoB"/>
    <property type="match status" value="1"/>
</dbReference>
<dbReference type="PANTHER" id="PTHR43464">
    <property type="entry name" value="METHYLTRANSFERASE"/>
    <property type="match status" value="1"/>
</dbReference>
<dbReference type="PANTHER" id="PTHR43464:SF95">
    <property type="entry name" value="TRNA U34 CARBOXYMETHYLTRANSFERASE"/>
    <property type="match status" value="1"/>
</dbReference>
<dbReference type="Pfam" id="PF08003">
    <property type="entry name" value="Methyltransf_9"/>
    <property type="match status" value="1"/>
</dbReference>
<dbReference type="SUPFAM" id="SSF53335">
    <property type="entry name" value="S-adenosyl-L-methionine-dependent methyltransferases"/>
    <property type="match status" value="1"/>
</dbReference>
<keyword id="KW-1185">Reference proteome</keyword>
<keyword id="KW-0808">Transferase</keyword>
<keyword id="KW-0819">tRNA processing</keyword>
<gene>
    <name evidence="1" type="primary">cmoB</name>
    <name type="ordered locus">Shew_2082</name>
</gene>
<reference key="1">
    <citation type="submission" date="2007-03" db="EMBL/GenBank/DDBJ databases">
        <title>Complete sequence of Shewanella loihica PV-4.</title>
        <authorList>
            <consortium name="US DOE Joint Genome Institute"/>
            <person name="Copeland A."/>
            <person name="Lucas S."/>
            <person name="Lapidus A."/>
            <person name="Barry K."/>
            <person name="Detter J.C."/>
            <person name="Glavina del Rio T."/>
            <person name="Hammon N."/>
            <person name="Israni S."/>
            <person name="Dalin E."/>
            <person name="Tice H."/>
            <person name="Pitluck S."/>
            <person name="Chain P."/>
            <person name="Malfatti S."/>
            <person name="Shin M."/>
            <person name="Vergez L."/>
            <person name="Schmutz J."/>
            <person name="Larimer F."/>
            <person name="Land M."/>
            <person name="Hauser L."/>
            <person name="Kyrpides N."/>
            <person name="Mikhailova N."/>
            <person name="Romine M.F."/>
            <person name="Serres G."/>
            <person name="Fredrickson J."/>
            <person name="Tiedje J."/>
            <person name="Richardson P."/>
        </authorList>
    </citation>
    <scope>NUCLEOTIDE SEQUENCE [LARGE SCALE GENOMIC DNA]</scope>
    <source>
        <strain>ATCC BAA-1088 / PV-4</strain>
    </source>
</reference>
<sequence>MISFSSFYQQIADSNLQHWLEELPAILGQWQREHKHGNLPKWEKVLNKLHYPAPDRIDFTTRVEVGSGDQLSKGQQEKLKNLLKLFCPWRKGPFDLHGIHIDTEWRSDWKWERVQPHISPLKNRTVLDVGCGSGYHMWRMLGDGAKRVVGIDPSPLFLCQFEAVKRLAGNDHPVHLLPLGIEQLPPLDAFDTVFSMGVLYHRRSPIDHLLQLRDQLRTGGELVLETLVVDGDENTVLVPGERYGKMNNVWFLPSAKALEAWLKKADFVDVRCVDIDVTSLAEQRSTEWMPNESLVDYLDPNDVSLTVEGYPAPKRATFIAVKNQPNKDLV</sequence>
<name>CMOB_SHELP</name>
<evidence type="ECO:0000255" key="1">
    <source>
        <dbReference type="HAMAP-Rule" id="MF_01590"/>
    </source>
</evidence>
<feature type="chain" id="PRO_0000313968" description="tRNA U34 carboxymethyltransferase">
    <location>
        <begin position="1"/>
        <end position="330"/>
    </location>
</feature>
<feature type="binding site" evidence="1">
    <location>
        <position position="91"/>
    </location>
    <ligand>
        <name>carboxy-S-adenosyl-L-methionine</name>
        <dbReference type="ChEBI" id="CHEBI:134278"/>
    </ligand>
</feature>
<feature type="binding site" evidence="1">
    <location>
        <position position="105"/>
    </location>
    <ligand>
        <name>carboxy-S-adenosyl-L-methionine</name>
        <dbReference type="ChEBI" id="CHEBI:134278"/>
    </ligand>
</feature>
<feature type="binding site" evidence="1">
    <location>
        <position position="110"/>
    </location>
    <ligand>
        <name>carboxy-S-adenosyl-L-methionine</name>
        <dbReference type="ChEBI" id="CHEBI:134278"/>
    </ligand>
</feature>
<feature type="binding site" evidence="1">
    <location>
        <position position="130"/>
    </location>
    <ligand>
        <name>carboxy-S-adenosyl-L-methionine</name>
        <dbReference type="ChEBI" id="CHEBI:134278"/>
    </ligand>
</feature>
<feature type="binding site" evidence="1">
    <location>
        <begin position="152"/>
        <end position="154"/>
    </location>
    <ligand>
        <name>carboxy-S-adenosyl-L-methionine</name>
        <dbReference type="ChEBI" id="CHEBI:134278"/>
    </ligand>
</feature>
<feature type="binding site" evidence="1">
    <location>
        <begin position="181"/>
        <end position="182"/>
    </location>
    <ligand>
        <name>carboxy-S-adenosyl-L-methionine</name>
        <dbReference type="ChEBI" id="CHEBI:134278"/>
    </ligand>
</feature>
<feature type="binding site" evidence="1">
    <location>
        <position position="196"/>
    </location>
    <ligand>
        <name>carboxy-S-adenosyl-L-methionine</name>
        <dbReference type="ChEBI" id="CHEBI:134278"/>
    </ligand>
</feature>
<feature type="binding site" evidence="1">
    <location>
        <position position="200"/>
    </location>
    <ligand>
        <name>carboxy-S-adenosyl-L-methionine</name>
        <dbReference type="ChEBI" id="CHEBI:134278"/>
    </ligand>
</feature>
<feature type="binding site" evidence="1">
    <location>
        <position position="315"/>
    </location>
    <ligand>
        <name>carboxy-S-adenosyl-L-methionine</name>
        <dbReference type="ChEBI" id="CHEBI:134278"/>
    </ligand>
</feature>
<accession>A3QEQ0</accession>
<proteinExistence type="inferred from homology"/>
<organism>
    <name type="scientific">Shewanella loihica (strain ATCC BAA-1088 / PV-4)</name>
    <dbReference type="NCBI Taxonomy" id="323850"/>
    <lineage>
        <taxon>Bacteria</taxon>
        <taxon>Pseudomonadati</taxon>
        <taxon>Pseudomonadota</taxon>
        <taxon>Gammaproteobacteria</taxon>
        <taxon>Alteromonadales</taxon>
        <taxon>Shewanellaceae</taxon>
        <taxon>Shewanella</taxon>
    </lineage>
</organism>
<comment type="function">
    <text evidence="1">Catalyzes carboxymethyl transfer from carboxy-S-adenosyl-L-methionine (Cx-SAM) to 5-hydroxyuridine (ho5U) to form 5-carboxymethoxyuridine (cmo5U) at position 34 in tRNAs.</text>
</comment>
<comment type="catalytic activity">
    <reaction evidence="1">
        <text>carboxy-S-adenosyl-L-methionine + 5-hydroxyuridine(34) in tRNA = 5-carboxymethoxyuridine(34) in tRNA + S-adenosyl-L-homocysteine + H(+)</text>
        <dbReference type="Rhea" id="RHEA:52848"/>
        <dbReference type="Rhea" id="RHEA-COMP:13381"/>
        <dbReference type="Rhea" id="RHEA-COMP:13383"/>
        <dbReference type="ChEBI" id="CHEBI:15378"/>
        <dbReference type="ChEBI" id="CHEBI:57856"/>
        <dbReference type="ChEBI" id="CHEBI:134278"/>
        <dbReference type="ChEBI" id="CHEBI:136877"/>
        <dbReference type="ChEBI" id="CHEBI:136879"/>
    </reaction>
</comment>
<comment type="subunit">
    <text evidence="1">Homotetramer.</text>
</comment>
<comment type="similarity">
    <text evidence="1">Belongs to the class I-like SAM-binding methyltransferase superfamily. CmoB family.</text>
</comment>